<keyword id="KW-0032">Aminotransferase</keyword>
<keyword id="KW-0663">Pyridoxal phosphate</keyword>
<keyword id="KW-1185">Reference proteome</keyword>
<keyword id="KW-0808">Transferase</keyword>
<dbReference type="EC" id="2.6.1.83" evidence="1"/>
<dbReference type="EMBL" id="CP000142">
    <property type="protein sequence ID" value="ABA89662.1"/>
    <property type="molecule type" value="Genomic_DNA"/>
</dbReference>
<dbReference type="RefSeq" id="WP_011342188.1">
    <property type="nucleotide sequence ID" value="NC_007498.2"/>
</dbReference>
<dbReference type="SMR" id="Q3A1U5"/>
<dbReference type="STRING" id="338963.Pcar_2423"/>
<dbReference type="KEGG" id="pca:Pcar_2423"/>
<dbReference type="eggNOG" id="COG0436">
    <property type="taxonomic scope" value="Bacteria"/>
</dbReference>
<dbReference type="HOGENOM" id="CLU_051433_0_0_7"/>
<dbReference type="OrthoDB" id="9804474at2"/>
<dbReference type="UniPathway" id="UPA00034">
    <property type="reaction ID" value="UER00466"/>
</dbReference>
<dbReference type="Proteomes" id="UP000002534">
    <property type="component" value="Chromosome"/>
</dbReference>
<dbReference type="GO" id="GO:0010285">
    <property type="term" value="F:L,L-diaminopimelate aminotransferase activity"/>
    <property type="evidence" value="ECO:0007669"/>
    <property type="project" value="UniProtKB-EC"/>
</dbReference>
<dbReference type="GO" id="GO:0030170">
    <property type="term" value="F:pyridoxal phosphate binding"/>
    <property type="evidence" value="ECO:0007669"/>
    <property type="project" value="InterPro"/>
</dbReference>
<dbReference type="GO" id="GO:0009089">
    <property type="term" value="P:lysine biosynthetic process via diaminopimelate"/>
    <property type="evidence" value="ECO:0007669"/>
    <property type="project" value="UniProtKB-UniPathway"/>
</dbReference>
<dbReference type="CDD" id="cd00609">
    <property type="entry name" value="AAT_like"/>
    <property type="match status" value="1"/>
</dbReference>
<dbReference type="FunFam" id="3.40.640.10:FF:000099">
    <property type="entry name" value="LL-diaminopimelate aminotransferase, chloroplastic"/>
    <property type="match status" value="1"/>
</dbReference>
<dbReference type="Gene3D" id="3.90.1150.10">
    <property type="entry name" value="Aspartate Aminotransferase, domain 1"/>
    <property type="match status" value="1"/>
</dbReference>
<dbReference type="Gene3D" id="3.40.640.10">
    <property type="entry name" value="Type I PLP-dependent aspartate aminotransferase-like (Major domain)"/>
    <property type="match status" value="1"/>
</dbReference>
<dbReference type="HAMAP" id="MF_01642">
    <property type="entry name" value="DapL_aminotrans_1"/>
    <property type="match status" value="1"/>
</dbReference>
<dbReference type="InterPro" id="IPR004839">
    <property type="entry name" value="Aminotransferase_I/II_large"/>
</dbReference>
<dbReference type="InterPro" id="IPR019942">
    <property type="entry name" value="DapL/ALD1"/>
</dbReference>
<dbReference type="InterPro" id="IPR015424">
    <property type="entry name" value="PyrdxlP-dep_Trfase"/>
</dbReference>
<dbReference type="InterPro" id="IPR015421">
    <property type="entry name" value="PyrdxlP-dep_Trfase_major"/>
</dbReference>
<dbReference type="InterPro" id="IPR015422">
    <property type="entry name" value="PyrdxlP-dep_Trfase_small"/>
</dbReference>
<dbReference type="NCBIfam" id="TIGR03542">
    <property type="entry name" value="DAPAT_plant"/>
    <property type="match status" value="1"/>
</dbReference>
<dbReference type="PANTHER" id="PTHR43144">
    <property type="entry name" value="AMINOTRANSFERASE"/>
    <property type="match status" value="1"/>
</dbReference>
<dbReference type="Pfam" id="PF00155">
    <property type="entry name" value="Aminotran_1_2"/>
    <property type="match status" value="1"/>
</dbReference>
<dbReference type="SUPFAM" id="SSF53383">
    <property type="entry name" value="PLP-dependent transferases"/>
    <property type="match status" value="1"/>
</dbReference>
<proteinExistence type="inferred from homology"/>
<comment type="function">
    <text evidence="1">Involved in the synthesis of meso-diaminopimelate (m-DAP or DL-DAP), required for both lysine and peptidoglycan biosynthesis. Catalyzes the direct conversion of tetrahydrodipicolinate to LL-diaminopimelate.</text>
</comment>
<comment type="catalytic activity">
    <reaction evidence="1">
        <text>(2S,6S)-2,6-diaminopimelate + 2-oxoglutarate = (S)-2,3,4,5-tetrahydrodipicolinate + L-glutamate + H2O + H(+)</text>
        <dbReference type="Rhea" id="RHEA:23988"/>
        <dbReference type="ChEBI" id="CHEBI:15377"/>
        <dbReference type="ChEBI" id="CHEBI:15378"/>
        <dbReference type="ChEBI" id="CHEBI:16810"/>
        <dbReference type="ChEBI" id="CHEBI:16845"/>
        <dbReference type="ChEBI" id="CHEBI:29985"/>
        <dbReference type="ChEBI" id="CHEBI:57609"/>
        <dbReference type="EC" id="2.6.1.83"/>
    </reaction>
</comment>
<comment type="cofactor">
    <cofactor evidence="1">
        <name>pyridoxal 5'-phosphate</name>
        <dbReference type="ChEBI" id="CHEBI:597326"/>
    </cofactor>
</comment>
<comment type="pathway">
    <text evidence="1">Amino-acid biosynthesis; L-lysine biosynthesis via DAP pathway; LL-2,6-diaminopimelate from (S)-tetrahydrodipicolinate (aminotransferase route): step 1/1.</text>
</comment>
<comment type="subunit">
    <text evidence="1">Homodimer.</text>
</comment>
<comment type="similarity">
    <text evidence="1">Belongs to the class-I pyridoxal-phosphate-dependent aminotransferase family. LL-diaminopimelate aminotransferase subfamily.</text>
</comment>
<reference key="1">
    <citation type="submission" date="2005-10" db="EMBL/GenBank/DDBJ databases">
        <title>Complete sequence of Pelobacter carbinolicus DSM 2380.</title>
        <authorList>
            <person name="Copeland A."/>
            <person name="Lucas S."/>
            <person name="Lapidus A."/>
            <person name="Barry K."/>
            <person name="Detter J.C."/>
            <person name="Glavina T."/>
            <person name="Hammon N."/>
            <person name="Israni S."/>
            <person name="Pitluck S."/>
            <person name="Chertkov O."/>
            <person name="Schmutz J."/>
            <person name="Larimer F."/>
            <person name="Land M."/>
            <person name="Kyrpides N."/>
            <person name="Ivanova N."/>
            <person name="Richardson P."/>
        </authorList>
    </citation>
    <scope>NUCLEOTIDE SEQUENCE [LARGE SCALE GENOMIC DNA]</scope>
    <source>
        <strain>DSM 2380 / NBRC 103641 / GraBd1</strain>
    </source>
</reference>
<feature type="chain" id="PRO_0000342253" description="LL-diaminopimelate aminotransferase">
    <location>
        <begin position="1"/>
        <end position="410"/>
    </location>
</feature>
<feature type="binding site" evidence="1">
    <location>
        <position position="15"/>
    </location>
    <ligand>
        <name>substrate</name>
    </ligand>
</feature>
<feature type="binding site" evidence="1">
    <location>
        <position position="42"/>
    </location>
    <ligand>
        <name>substrate</name>
    </ligand>
</feature>
<feature type="binding site" evidence="1">
    <location>
        <position position="72"/>
    </location>
    <ligand>
        <name>pyridoxal 5'-phosphate</name>
        <dbReference type="ChEBI" id="CHEBI:597326"/>
    </ligand>
</feature>
<feature type="binding site" evidence="1">
    <location>
        <begin position="108"/>
        <end position="109"/>
    </location>
    <ligand>
        <name>pyridoxal 5'-phosphate</name>
        <dbReference type="ChEBI" id="CHEBI:597326"/>
    </ligand>
</feature>
<feature type="binding site" evidence="1">
    <location>
        <position position="109"/>
    </location>
    <ligand>
        <name>substrate</name>
    </ligand>
</feature>
<feature type="binding site" evidence="1">
    <location>
        <position position="132"/>
    </location>
    <ligand>
        <name>pyridoxal 5'-phosphate</name>
        <dbReference type="ChEBI" id="CHEBI:597326"/>
    </ligand>
</feature>
<feature type="binding site" evidence="1">
    <location>
        <position position="132"/>
    </location>
    <ligand>
        <name>substrate</name>
    </ligand>
</feature>
<feature type="binding site" evidence="1">
    <location>
        <position position="187"/>
    </location>
    <ligand>
        <name>pyridoxal 5'-phosphate</name>
        <dbReference type="ChEBI" id="CHEBI:597326"/>
    </ligand>
</feature>
<feature type="binding site" evidence="1">
    <location>
        <position position="187"/>
    </location>
    <ligand>
        <name>substrate</name>
    </ligand>
</feature>
<feature type="binding site" evidence="1">
    <location>
        <position position="218"/>
    </location>
    <ligand>
        <name>pyridoxal 5'-phosphate</name>
        <dbReference type="ChEBI" id="CHEBI:597326"/>
    </ligand>
</feature>
<feature type="binding site" evidence="1">
    <location>
        <begin position="246"/>
        <end position="248"/>
    </location>
    <ligand>
        <name>pyridoxal 5'-phosphate</name>
        <dbReference type="ChEBI" id="CHEBI:597326"/>
    </ligand>
</feature>
<feature type="binding site" evidence="1">
    <location>
        <position position="257"/>
    </location>
    <ligand>
        <name>pyridoxal 5'-phosphate</name>
        <dbReference type="ChEBI" id="CHEBI:597326"/>
    </ligand>
</feature>
<feature type="binding site" evidence="1">
    <location>
        <position position="292"/>
    </location>
    <ligand>
        <name>pyridoxal 5'-phosphate</name>
        <dbReference type="ChEBI" id="CHEBI:597326"/>
    </ligand>
</feature>
<feature type="binding site" evidence="1">
    <location>
        <position position="292"/>
    </location>
    <ligand>
        <name>substrate</name>
    </ligand>
</feature>
<feature type="binding site" evidence="1">
    <location>
        <position position="388"/>
    </location>
    <ligand>
        <name>substrate</name>
    </ligand>
</feature>
<feature type="modified residue" description="N6-(pyridoxal phosphate)lysine" evidence="1">
    <location>
        <position position="249"/>
    </location>
</feature>
<name>DAPAT_SYNC1</name>
<accession>Q3A1U5</accession>
<sequence>MAQLNDNYLKLKAGYLFPEIGRRVKAFSQANPEAKIIRLGIGDVTQPLAPAVLKAFHDGVDDLANKDKFMGYGPEQGYEFLIDTLIEKAYKPLGVELKTSEIFISDGSKCDCANILDIFALDNKVAICDPVYPVYNDTNVMVGRTGEADDKGYYEGLTYLACTEENGFTPAIPKEKVDIIYLCYPNNPTGTVATKEVLKAWVDYALANDAVIFFDAAYEAFITEPGIPHSIYEIEGANRCAIEFRSFSKTAGFTGVRCALTVVPEELLAATGNGEKVSLNKLWNRRQSTKFNGVSYPVQKAAAAVYSDEGWAQIKETIDYYMENARLIREGLQEAGLTVYGGVNAPYIWLKTPNGMSSWDFFDKLLSECHVVGTPGSGFGPSGEGFYRLSAFGDRENVLTAIDRIKKNLA</sequence>
<evidence type="ECO:0000255" key="1">
    <source>
        <dbReference type="HAMAP-Rule" id="MF_01642"/>
    </source>
</evidence>
<gene>
    <name evidence="1" type="primary">dapL</name>
    <name type="ordered locus">Pcar_2423</name>
</gene>
<protein>
    <recommendedName>
        <fullName evidence="1">LL-diaminopimelate aminotransferase</fullName>
        <shortName evidence="1">DAP-AT</shortName>
        <shortName evidence="1">DAP-aminotransferase</shortName>
        <shortName evidence="1">LL-DAP-aminotransferase</shortName>
        <ecNumber evidence="1">2.6.1.83</ecNumber>
    </recommendedName>
</protein>
<organism>
    <name type="scientific">Syntrophotalea carbinolica (strain DSM 2380 / NBRC 103641 / GraBd1)</name>
    <name type="common">Pelobacter carbinolicus</name>
    <dbReference type="NCBI Taxonomy" id="338963"/>
    <lineage>
        <taxon>Bacteria</taxon>
        <taxon>Pseudomonadati</taxon>
        <taxon>Thermodesulfobacteriota</taxon>
        <taxon>Desulfuromonadia</taxon>
        <taxon>Desulfuromonadales</taxon>
        <taxon>Syntrophotaleaceae</taxon>
        <taxon>Syntrophotalea</taxon>
    </lineage>
</organism>